<organism>
    <name type="scientific">Salinispora arenicola (strain CNS-205)</name>
    <dbReference type="NCBI Taxonomy" id="391037"/>
    <lineage>
        <taxon>Bacteria</taxon>
        <taxon>Bacillati</taxon>
        <taxon>Actinomycetota</taxon>
        <taxon>Actinomycetes</taxon>
        <taxon>Micromonosporales</taxon>
        <taxon>Micromonosporaceae</taxon>
        <taxon>Salinispora</taxon>
    </lineage>
</organism>
<comment type="function">
    <text evidence="4 5">Probable non-canonical nonribosomal peptide synthetase (NRPS); part of the gene cluster that mediates the biosynthesis of cyclic heptapeptides, known as cyclomarins and also of cyclic dipeptides, called cyclomarazines, which have both antimicrobial and cytotoxic effects (Probable). First, CymD catalyzes the reverse N-prenylation of monomeric L-tryptophan with dimethylallyl diphosphate (DMAPP) to form N-(1,1-dimethylallyl)-tryptophan (r-N-DMAT) (Probable). The N-(1,1-dimethylallyl)-tryptophan produced by CymD is then combined with a range of standard and nonproteinogenic amino acid substrates to synthesize the peptides, a process that is probably catalyzed by the non-canonical nonribosomal peptide synthetase (NRPS), CymA (Probable). Other proteins in the cluster catalyze further modifications of the peptides including CymV which catalyzes the oxidation of olefinic cyclomarins and cyclomarazines to their respective epoxide derivatives (Probable).</text>
</comment>
<comment type="cofactor">
    <cofactor evidence="1">
        <name>pantetheine 4'-phosphate</name>
        <dbReference type="ChEBI" id="CHEBI:47942"/>
    </cofactor>
</comment>
<keyword id="KW-0433">Leucine-rich repeat</keyword>
<keyword id="KW-0596">Phosphopantetheine</keyword>
<keyword id="KW-0597">Phosphoprotein</keyword>
<keyword id="KW-0677">Repeat</keyword>
<evidence type="ECO:0000255" key="1"/>
<evidence type="ECO:0000255" key="2">
    <source>
        <dbReference type="PROSITE-ProRule" id="PRU00258"/>
    </source>
</evidence>
<evidence type="ECO:0000303" key="3">
    <source>
    </source>
</evidence>
<evidence type="ECO:0000305" key="4"/>
<evidence type="ECO:0000305" key="5">
    <source>
    </source>
</evidence>
<evidence type="ECO:0000312" key="6">
    <source>
        <dbReference type="EMBL" id="ABW00331.1"/>
    </source>
</evidence>
<sequence>MSSADVAATIVRLYESAVEAHPDKPVINDGHRVWSYRELNSAANRIAWWLIGRGVGPEQTVGVALDRGIDQIAALLGTLKAGAVYLPLDPVLPAERINYLLADATPSLILDGDAAASAGQPEDTPAVPLTSDSLAYVIYTSGSTGTPKGVGVTHGSMVNLARTVTGQYALGDTPRVLQLASLGFDVAIWELLTAVATGGTLVVSQADQLSGDDLLRVLREQRITHVTLPVPVLASLPPDAENQLPDLTTVHIGGETCPPELVRRWSAGRRLINGYGATETTVAATLTPPLTGPDAPIGKAIDGTRVYVLDDTLAQVVLGAAGELYVAGANVARGYLRRPGLTASRFLADPYGPPGSRMYRTGDVGLIRPDGQLEFLRRADDQVKIRGARVEPGELEAVLQRRTDVVHAAVTVRPDARGERQLVAYVVPAAAATGAAELRDDLRGTLPSYLVPSSVVLLDSLPLTPNGKVDRDALPDPEYAPAGLDRTARSPLEDMLRVVFAEILELPQVGFDDDFFDLGGHSLLAGRLIGRIRGTLGLEVHMKDFFEKSTPAALASYLQRQETGPARPELTRLPRPDRIPLSFAQQRLWFLHRLEGPSATYNMPLALHLTGKVDTGALAAALTDVIRRHEPLRTLIREVDGQPYQQILDPEEVRPALPVRQVGAAQLDEELRRSARHEFDLARQIPVRAELLTVSPDESVLMLVIHHIAGDGWSGAPLARDLVTAHSARLTGVAPQWPPLPVQYADYTLWQRAMLGGEEEPASPLNEQLRYWREQLADLPHEITVPGDRPRPAVATYRGGVVPITMDADLHAGITELARRNGATVYMVLQSTVTALLTRLGAGTDVAIGAGVAGRSEPALDDLVGLFVNMLVLRTDTAGSPRFTELLQQVRDTSLGAYGHQDIPFEQLVESLNPHRVAGRQSLFQVALVLQNNTSVPFDLPGLRVRAEQIPTGTARFDLSLSVTEHGDGISGTVEYAADLYDRATAEAVVERWIQLIRQVVADPARRVDTLDVTTPGDESRLAGWRRYERDVPPVTFGDLFARQVAATPDAIAVSDGGDVWTYREVNRYANHVADRLIDRGIGPEDFVAVAMPRSARLVASLLGVLKAGAAYVPVDLVFPARRNRHVIIDSNPRLVLTSRAGAENLPADLPCELVMIDAWGTGREDGPADADRVRPSNVDSPAYVIYTSGSTGQPKGVVVTHRGLAAFAETLRERCAAGPNDRVLQLSSPSVDASVLEMVWAFSSGARLVIASQYRLAGEELAQALAEQRITHAHIPPSALSTIPAEAAGRLPEFRRLSVGAESCPSELVRLWLPGRDFVNAYGPTECTVAASHTFPLAEARAPIGRPVIDAELYVLDETLRPAAPGVPGELYIGGAGLARGYLRRGGLTASRFVANPYGEPGSRVYRTGDVVRWNTDGELEYLGRSDEQVKVRGFRVEPGEVERVLASQPSVDRAVVVPRRDRSGAVSLAAYVVLAAASPAGFDDQLSEWNDIYDQVYAGFSGDAGNDFIGWTSSFTGGPIPIEEMREWQRSAVDAVRRFGRGRVLEIGSGSGLLMTPLADAVDEYWGTDLSEISIDRLRAFADARRWNHVRLSCQPAHDVSGLPRRYFDTVVINSVVQYFPSADYLRDVLAKVVDLLADGGRVIVGDVRHYGLLRVFHAAVHDFRGTEGLRAAVEHAMAVEKELLLAPEFFTSIDHPAVTGVEVTLKAGQASNELTGYRYEVVLHTAPARRLTTLPVLVWGRDTTDLDEVTGPARVTGIPNPRLAGGVAAVRLLDGMDAVPPAAGPELESEAVRRWAVQRGMRAVPTWSSNRWNTYDVVLIHAAEAEPLADVYRPADGVEPANVPEVARTAGKLVSELRSTVQGLLPDYMVPATITPIERIPVTPNGKIDRRALPDPEVVLSRGRHARTPLEQILCELYADILGLERVGVDDSFFDRGGHSLLATRLTSRIRSVLGVEALLQQVFAAPSPAELAVVLSEQQGRVQQALEPVARPEVLPLSFAQQRLWFLHKLEGPSATYNSPLALRLSGTLEVTALRAALGDVVGRHEALRTVFAETDGVPYQKVLDVADVDLSVREVAADELPGVLRDAARYEFDLAREIPVRAWLFAAGPGEWVLMLVLHHIAADGWSLGPLARDLATAYADRRMGRGPSWSPLPVQYADYTLWQRRLLGDEADPDSVFGRQLAYWRGQLAGLPQQVTLPTDRPRPQTASYAGDVTMFRLDAGLHADLLRLARTSGATLFMVLQAALVAVLTRLGAGDDVPLGSPIAGRSDDGLDDLVGFFVNTLVLRADTSGNPGFDELLERVRDTSLEAYAHQDVPFEFLVEKLNPHRSTAHSPLFQVLLAFQNNSDTSFHLPGLRAEREEIGTRVSRVDLTLNITEAFGVNGAPQGIRGAVEYATDLYDARTVESFAARFVRMLQAAVADPSRRINAVDLLSDEENATVLALSGRDAAVPESRVWPAVFEATAAAAPDATAVVEGQLSWTYAQLNANANRLARYLIDRGVGPEDVVGVLMPRSAMQIATVLAIGKAGAAFLPIDPAYPAERVEYLIADARPKMLLADTAHVGVAAGAIAIDEPAVATALREAPVTDPAGVAVRLEHPAYVIYTSGSTGRPKGTIVTHSGLAALAVSGCERAAVDRDSRVLQLTSPSFDVSVFEFLAAFHAGAVLVMPEPGRLAGEELAELLADAGVSHAFVPPSVLATLPDEAPGRLAGLRSLVVGGEACSADLVRRWSVGRRMTNLYGPTETTVAASISRPMSTGAHPIGAPLPGTRVYVLDANLRPVPPGARGELYISGIGVARGYLGRPVLTASRFVADPFGPAGARAYRTGDVVRWNADGELEYFGRSDHQLKIRGFRVEPGEIEAALVRRPSVAQAVVVARPDQHGFQALYAYVTAGAEPADAARLREELRAELPDYLVPAAIVVLDEFPLNANGKLDRNALPEPRFVTSAADIRSPGMPQEEILRSVFADVLGIERISADDNFFDLGGHSLLVTRLISRVRGTLGVDVSMQTFFNAPTPRQLAGQLLEGGPVPARLQPVPRPEALPLSFAQQRLWFLHKLEGPSATYNSPLAIKLSGELDVDALRLALADVVVRHEALRTVFAERAGNPYQRILDSAEVELPVREVPQSKLPDALREAARYEFDLAREIPLRAWLFTAGPGEWVLMLALHHVVADGWSLQVLVSNLTAAYTSRRAGHAPSWQPLPVQYADYTLWQRRHLGTEDDPDSVSSRQVSYWLEQLADLPDQVTLPTDRPRPAVASYRGETVTFDLDAEEHAELVRLARETGTTLFMILQAALAGLLTRLGAGTDIAIGSPIAGRTDDRLENLIGLFVNMLVLRTDTGGDPTLGELLTRVRETSLAAYAHQHMPFEYLVERLNPHRSAAHHPLVQILFGLQNTAEQNVSLPGVTASGMSVDTGVSRVDLSINIVEASAPDGSPAGLTGLVEFSTDLYDRATVEAFAARWVRVLRAMVVAPGSRLSGVQLLGADERVRLLQRWGAASGPVAAVTLAELFERRVAARPDAVAVVEGEVSWSYARLNAYANRVAWSLVERGVGVEDVVAVVLPRGAVQVATVLGVVKAGAAYLPVDPSYPRARVEYLLQDAGPALVIGESDVFDGQPEHDPVRPVPVDAAAYVIYTSGSTGQPKGVVVTHRGLASMAATQQRLGAGEGSRVLQFAALGFDATVWELVMALGAGAALVVPKTDQLAGEDLAAVLREQRITHLTLPPTVLATVPADRLPDLGTLVVAGEACPPELTARWSPGRRMFNAYGPTESTVCASISAELSPGLAPIGGPVLNTRLYVLDDALQPAASGVPGELYIAGEGLARGYRGRAGLTATRILADPYGPVGSRMYRTGDVVRWNADGDLEYLGRSDEQVKIRGFRVEPGEVASVLLRHPAVAQAAVIVRLEQLLAYAVPALGRAVRDGELRAYLQDELPEHTVPSAVVLLDEIPRTSHGKVDQRALPDPEQAGGRGRAPRTPQEELLCVLFAQVLDVQQVGPDDSFFDLGGHSLLATRLIIRIRRAFRCELPPRALFAAPSPAELAVVLSEQQGRVQQALEPVARPEVLPLSFAQQRLWFLHKLEGPSATYNSPLALRLSGTLEVTALRAALGDVVGRHEALRTVFAETDGVPYQKVLDVADVDLSVREVAADELPGVLRDAARYEFDLAREIPVRAWLFAAGPGEWVLMLVLHHIAADGWSLGPLARDLATAYADRRMGRGPSWSPLPVQYADYTLWQRRLLGDEADPDSVFGRQLAYWRGQLAGLPQQVTLPTDRPRPQTASYAGDVTMFRLDAGLHADLLRLARTSGATLFMVLQAALVAVLTRLGAGDDVPLGSPIAGRSDDGLDDLVGFFVNTLVLRADTSGNPGFDELLERVRDTSLEAYAHQDVPFEFLVEKLNPHRSTAHSPLFQVLLAFQNNSDTSFHLPGLRTRLEGVSTGLSRVDLFISLAEQPDAGGVIGAVEYATDLYDAATVEAFVGRWLRFLAAVAHDPEQRIGSVDLLLDGERERLTGWAYTEPEVEPATLSELFERRVAARPDAVAVVEGEVSWSYARLNAYANRVAWSLVERGVGVEDVVAVVLPRGAVQVATVLGVVKAGAAYLPVDPSYPRARVEYLLQDAGPALVIGESDVFDGQPEHDPVRPVPVDAAAYVIYTSGSTGQPKGVVVTHRGLAALATGTVGRNAVAGDSRVLLLASPSFDASVLELMIAIGAGAALVVSRESRLAGEELATLIAQARVTHAFVPPSVLATLPGAATGELPAFQGLVVGGEACSPDLVRRWSAGRRMTNLYGPTETTVATTVSRPLFGEAHPIGAPLPGWRVYVLDAGLHLVPPGSRGELYIGGVGLTRGYLRRAGLTASRFVADPFGPAGARMYRTGDVVRWNADGELEYLGRSDHQVQIRGIRVEPGEVQAALTAHPDVARAVVVVSDDRRGDPALVGYMVPERPGADPAAVREDLRRILPDHLVPVAIVVLPEIPLTPNGKLDRDALPDPEYETSRGREPRTPEEEILCGLFTEVLGLKQVGAEDDFFDLGGHSLLGTRLISGIRAKLGFEVRLLTLFEASTPAALARAMLEANAPARTALEPMPRPELLPLSFAQQRLWFLHKLEGPSPTYNMPLTLQLSGPLDVPALRAALTDVVGRHEALRTVFAEHDGQAYQRILDPVEIELPVHDAASDEALQAAARHRFDLAGEIPLRVSLYAAGPGEWVLMLVLHHIVADGWSLRPLARDLATAYAARTAGRAPDWAPPPVQYADYTLWHRELLGDDADPDSAFGRQLAFWRDRLADLPEQVTLPTDRPRPRVASYRGDVSTFQVDAELHAGLMALARQTGSTLFMVLQTALSALLTRSGAGTDVVVGAGVAGRTDERLDDLVGFFVNMVVLRTDTSDDPTFVELLQRVRASSLAAYAHQDIPFEYLVEKINPLRSASHQSLFQIAMVLQNNAEADFDLSGVRVWQEGRGTGTSRFDLSLSLTETTTADGRPTGVTGVVEFSTDLYDRATVEAFAARWVRVLRAMVVAPGSRLSGVQLLGADERVRLLQRWGAASGPVAAVTLAELFERRVAARPDAVAVVEGEVSWSYARLNAYANRVAWSLVERGVGVEDVVAVVLPRGAVQVATVLGVVKAGAAYLPVDPSYPRARVEYLLQDAGPALVIGESDVFDGQPEHDPVRPVPVDAAAYVIYTSGSTGQPKGVVVTHRGLSGLAATLRQRCAADVDSRILQASSPSFDAAVLELVWAWDSGAALVIASADRLAGDELARALADHRITHALIPPSVLSTLAADAPRTLTDFRTLIVGAEACPPELLRRWAPGRRMVNAYGPTEATVVASQTGELHEPPVSIGKPALGTRLYVLDERLGLAAPGVPGELYIAGAGVARGYRTRPSLTASRFLADPYGPAGTRMYRTGDLVRWNADGDLEYLGRSDEQVKIRGFRVEPGEVERVLAAQPSVARAVVVPRPDRSGAVSLAAYVVLADQGSATDFDDQLDEWRSIYHEVYSGLAREPGTDFAGWNSSFTGTPIPIEQMREWQRSAVEQVARFGPRRVLEIGAGSGLLMVPLIERTEEYWATDFSAAAVERLREYARERGWEHAHLRCQPAHDMWGLPRSHFDTIVLNSVVQYFPSTDYLRDVLGKALDLLADGGRLVVGDVRHHGLLRAMHTAVQEFRNPGSGSSAVDHAVAIEKELLLAPEFFTAFRHPRATGVEVLLKRGSADNELTAYRYEVVLHTGATRPVGDLPELVWGHDVTDLADVTAPARLTRIPNPRLVGINEPRLHPEQVRRWAAERSWRAVPTWSPRNWDGYDVVLLAADEDEALTDVYRPGTPEVVANVPAVARTAGEHVSELRGTIKSLLPDHMVPATITPIERIPLTPNGKIDRRALPEPEIVTTTTEERGPRDPYEEILCELYADLLGLPRVGVDESFFDLGGHSLLATRLTSRIRAVLGIEVPLQQVFAASTPAQLAAVLAQGSGRAGPALEPAPRPEVLPLSFAQQRLWFMQNLEGASATYNSPLAVRLSGALDVAAMRAALGDVLARHEVLRTVFGERRGEPYQRILDAVEIDLPVRAVAEGDLTQVLRDASRHEFDLSREIPVRASLFNTGRDEWVLLLVVHHVAVDGWSMRPLTRDLTTAYEQRAAGRVPDWAPLRVQYADFALWQHRMLGDEADPDSRLSRQLAYWRDQLAGLPRLVTLPADRPRPDEASHRGAMLTRNLDADLHQALRVLARRHGSTLFMALQAALGAQLSRSGAGTDIPVGAPIAGRADDALEDLVGFFINTLVLRIDTSGRPSFTRLLKQVRETSLAAYAHQDVPFDHLVEKLNPDRSPGQHPLFQVQLVLQNTPDAEFELAGLTARPQLDGVETGVSRVDLSVNAIETFDDHGLPAGLILVVEYATDLYDSATVDAFLDEFGQLLHEVADSPDQPIGGLELDNIAAPVPGTLPQLFETWAAATPSAIAVTDGAADMTYAELNSRANRMARALIDRGAGPEDLVAVLLPRSVRQVATILAIAKSGAAYLPIDPTYPADRVAYLCADALPKLIVTDAAGSARLGADQPVIDVDDPATVAQWESRPDTDPTDRDRTTALGLDHPAYVIYTSGSTGRPKGAVITQAGLAGAAEAWVQRWGFEPGSRVLQLSSPSFDASIMDFIVAFAAQGTLVLPEPGLIAGEALARVLTEKRITHLVTLPSVLASMPVDVAGRLTGLRGLLLGGEVLTPDLAARWSPGRRMINVYGQTETTVACTMTDPLAGERVTVGRPIPGTRVYVLDALLRVVPPGTDGELYVAGPAVGRGYLHRAGLTASRFVADPYGPPGSRMYRTGDLGRLNYAFELEYAGRTDEQVKIRGMRVEPGEVEAALAEHPAVARAAVAVRADRQGDLALFGYVIPVQAGADVSGIREDLRRSLPEHLVPAVMTAMTDFPLTPNGKVDRDALPAPQVTAPVGRGPRTPQEEILCGLFAELLGLGQIGVEDNFFDLGGHSLLANKLIARIAEVMGTEIPIRTFFAGPTVAQLAEQLGSDGTDRAFDVLLPLRTGGTLPPLFCIHPGAAICWSYADLLLHLSPDFPVYGLQSPALSHPDELPETLIQVADDCIEEMRQVQKTGPYYLLGQSFGGVVAHAMAARLEAAGEQVGLIVALDSEPSRSLSEHEQAQVIEATAKVYTGILEVLGVDPAALPSGNLTFAQFSELARTTNTLLGNVAEDEFHLLMAILHGNISIATRHRSERVDADMLIFGAAEERERVLDPEVWREFVGGEITYHPIPTSHSTIMAPEALQVIGPILEQHLRAVIAGNATTKEEN</sequence>
<gene>
    <name evidence="3" type="primary">cymA</name>
    <name evidence="6" type="ordered locus">Sare_4562</name>
</gene>
<protein>
    <recommendedName>
        <fullName evidence="5">Probable non-canonical nonribosomal peptide synthetase (NRPS) CymA</fullName>
    </recommendedName>
</protein>
<proteinExistence type="inferred from homology"/>
<reference key="1">
    <citation type="submission" date="2007-10" db="EMBL/GenBank/DDBJ databases">
        <title>Complete sequence of Salinispora arenicola CNS-205.</title>
        <authorList>
            <consortium name="US DOE Joint Genome Institute"/>
            <person name="Copeland A."/>
            <person name="Lucas S."/>
            <person name="Lapidus A."/>
            <person name="Barry K."/>
            <person name="Glavina del Rio T."/>
            <person name="Dalin E."/>
            <person name="Tice H."/>
            <person name="Pitluck S."/>
            <person name="Foster B."/>
            <person name="Schmutz J."/>
            <person name="Larimer F."/>
            <person name="Land M."/>
            <person name="Hauser L."/>
            <person name="Kyrpides N."/>
            <person name="Ivanova N."/>
            <person name="Jensen P.R."/>
            <person name="Moore B.S."/>
            <person name="Penn K."/>
            <person name="Jenkins C."/>
            <person name="Udwary D."/>
            <person name="Xiang L."/>
            <person name="Gontang E."/>
            <person name="Richardson P."/>
        </authorList>
    </citation>
    <scope>NUCLEOTIDE SEQUENCE [LARGE SCALE GENOMIC DNA]</scope>
    <source>
        <strain>CNS-205</strain>
    </source>
</reference>
<reference evidence="4" key="2">
    <citation type="journal article" date="2008" name="J. Am. Chem. Soc.">
        <title>Biosynthesis and structures of cyclomarins and cyclomarazines, prenylated cyclic peptides of marine actinobacterial origin.</title>
        <authorList>
            <person name="Schultz A.W."/>
            <person name="Oh D.C."/>
            <person name="Carney J.R."/>
            <person name="Williamson R.T."/>
            <person name="Udwary D.W."/>
            <person name="Jensen P.R."/>
            <person name="Gould S.J."/>
            <person name="Fenical W."/>
            <person name="Moore B.S."/>
        </authorList>
    </citation>
    <scope>FUNCTION</scope>
</reference>
<dbReference type="EMBL" id="CP000850">
    <property type="protein sequence ID" value="ABW00331.1"/>
    <property type="molecule type" value="Genomic_DNA"/>
</dbReference>
<dbReference type="STRING" id="391037.Sare_4562"/>
<dbReference type="KEGG" id="saq:Sare_4562"/>
<dbReference type="eggNOG" id="COG1020">
    <property type="taxonomic scope" value="Bacteria"/>
</dbReference>
<dbReference type="HOGENOM" id="CLU_222740_0_0_11"/>
<dbReference type="GO" id="GO:0005829">
    <property type="term" value="C:cytosol"/>
    <property type="evidence" value="ECO:0007669"/>
    <property type="project" value="TreeGrafter"/>
</dbReference>
<dbReference type="GO" id="GO:0003824">
    <property type="term" value="F:catalytic activity"/>
    <property type="evidence" value="ECO:0007669"/>
    <property type="project" value="InterPro"/>
</dbReference>
<dbReference type="GO" id="GO:0031177">
    <property type="term" value="F:phosphopantetheine binding"/>
    <property type="evidence" value="ECO:0007669"/>
    <property type="project" value="InterPro"/>
</dbReference>
<dbReference type="GO" id="GO:0043041">
    <property type="term" value="P:amino acid activation for nonribosomal peptide biosynthetic process"/>
    <property type="evidence" value="ECO:0007669"/>
    <property type="project" value="TreeGrafter"/>
</dbReference>
<dbReference type="GO" id="GO:0008610">
    <property type="term" value="P:lipid biosynthetic process"/>
    <property type="evidence" value="ECO:0007669"/>
    <property type="project" value="UniProtKB-ARBA"/>
</dbReference>
<dbReference type="GO" id="GO:0009403">
    <property type="term" value="P:toxin biosynthetic process"/>
    <property type="evidence" value="ECO:0007669"/>
    <property type="project" value="UniProtKB-ARBA"/>
</dbReference>
<dbReference type="CDD" id="cd02440">
    <property type="entry name" value="AdoMet_MTases"/>
    <property type="match status" value="2"/>
</dbReference>
<dbReference type="CDD" id="cd19540">
    <property type="entry name" value="LCL_NRPS-like"/>
    <property type="match status" value="6"/>
</dbReference>
<dbReference type="FunFam" id="3.30.300.30:FF:000010">
    <property type="entry name" value="Enterobactin synthetase component F"/>
    <property type="match status" value="4"/>
</dbReference>
<dbReference type="FunFam" id="1.10.1200.10:FF:000016">
    <property type="entry name" value="Non-ribosomal peptide synthase"/>
    <property type="match status" value="3"/>
</dbReference>
<dbReference type="FunFam" id="3.30.559.10:FF:000012">
    <property type="entry name" value="Non-ribosomal peptide synthetase"/>
    <property type="match status" value="1"/>
</dbReference>
<dbReference type="FunFam" id="3.30.559.30:FF:000001">
    <property type="entry name" value="Non-ribosomal peptide synthetase"/>
    <property type="match status" value="4"/>
</dbReference>
<dbReference type="FunFam" id="3.40.50.12780:FF:000012">
    <property type="entry name" value="Non-ribosomal peptide synthetase"/>
    <property type="match status" value="4"/>
</dbReference>
<dbReference type="FunFam" id="3.40.50.980:FF:000001">
    <property type="entry name" value="Non-ribosomal peptide synthetase"/>
    <property type="match status" value="3"/>
</dbReference>
<dbReference type="FunFam" id="2.30.38.10:FF:000001">
    <property type="entry name" value="Non-ribosomal peptide synthetase PvdI"/>
    <property type="match status" value="4"/>
</dbReference>
<dbReference type="Gene3D" id="3.30.300.30">
    <property type="match status" value="9"/>
</dbReference>
<dbReference type="Gene3D" id="3.40.50.980">
    <property type="match status" value="4"/>
</dbReference>
<dbReference type="Gene3D" id="1.10.1200.10">
    <property type="entry name" value="ACP-like"/>
    <property type="match status" value="6"/>
</dbReference>
<dbReference type="Gene3D" id="3.40.50.1820">
    <property type="entry name" value="alpha/beta hydrolase"/>
    <property type="match status" value="1"/>
</dbReference>
<dbReference type="Gene3D" id="3.30.559.10">
    <property type="entry name" value="Chloramphenicol acetyltransferase-like domain"/>
    <property type="match status" value="6"/>
</dbReference>
<dbReference type="Gene3D" id="2.30.38.10">
    <property type="entry name" value="Luciferase, Domain 3"/>
    <property type="match status" value="2"/>
</dbReference>
<dbReference type="Gene3D" id="3.40.50.12780">
    <property type="entry name" value="N-terminal domain of ligase-like"/>
    <property type="match status" value="5"/>
</dbReference>
<dbReference type="Gene3D" id="3.30.559.30">
    <property type="entry name" value="Nonribosomal peptide synthetase, condensation domain"/>
    <property type="match status" value="6"/>
</dbReference>
<dbReference type="Gene3D" id="3.40.50.150">
    <property type="entry name" value="Vaccinia Virus protein VP39"/>
    <property type="match status" value="2"/>
</dbReference>
<dbReference type="InterPro" id="IPR010071">
    <property type="entry name" value="AA_adenyl_dom"/>
</dbReference>
<dbReference type="InterPro" id="IPR029058">
    <property type="entry name" value="AB_hydrolase_fold"/>
</dbReference>
<dbReference type="InterPro" id="IPR036736">
    <property type="entry name" value="ACP-like_sf"/>
</dbReference>
<dbReference type="InterPro" id="IPR025110">
    <property type="entry name" value="AMP-bd_C"/>
</dbReference>
<dbReference type="InterPro" id="IPR045851">
    <property type="entry name" value="AMP-bd_C_sf"/>
</dbReference>
<dbReference type="InterPro" id="IPR020845">
    <property type="entry name" value="AMP-binding_CS"/>
</dbReference>
<dbReference type="InterPro" id="IPR000873">
    <property type="entry name" value="AMP-dep_synth/lig_dom"/>
</dbReference>
<dbReference type="InterPro" id="IPR042099">
    <property type="entry name" value="ANL_N_sf"/>
</dbReference>
<dbReference type="InterPro" id="IPR023213">
    <property type="entry name" value="CAT-like_dom_sf"/>
</dbReference>
<dbReference type="InterPro" id="IPR001242">
    <property type="entry name" value="Condensatn"/>
</dbReference>
<dbReference type="InterPro" id="IPR013217">
    <property type="entry name" value="Methyltransf_12"/>
</dbReference>
<dbReference type="InterPro" id="IPR020806">
    <property type="entry name" value="PKS_PP-bd"/>
</dbReference>
<dbReference type="InterPro" id="IPR020802">
    <property type="entry name" value="PKS_thioesterase"/>
</dbReference>
<dbReference type="InterPro" id="IPR009081">
    <property type="entry name" value="PP-bd_ACP"/>
</dbReference>
<dbReference type="InterPro" id="IPR006162">
    <property type="entry name" value="Ppantetheine_attach_site"/>
</dbReference>
<dbReference type="InterPro" id="IPR029063">
    <property type="entry name" value="SAM-dependent_MTases_sf"/>
</dbReference>
<dbReference type="InterPro" id="IPR001031">
    <property type="entry name" value="Thioesterase"/>
</dbReference>
<dbReference type="NCBIfam" id="TIGR01733">
    <property type="entry name" value="AA-adenyl-dom"/>
    <property type="match status" value="7"/>
</dbReference>
<dbReference type="NCBIfam" id="NF003417">
    <property type="entry name" value="PRK04813.1"/>
    <property type="match status" value="9"/>
</dbReference>
<dbReference type="NCBIfam" id="NF004282">
    <property type="entry name" value="PRK05691.1"/>
    <property type="match status" value="10"/>
</dbReference>
<dbReference type="PANTHER" id="PTHR45527:SF1">
    <property type="entry name" value="FATTY ACID SYNTHASE"/>
    <property type="match status" value="1"/>
</dbReference>
<dbReference type="PANTHER" id="PTHR45527">
    <property type="entry name" value="NONRIBOSOMAL PEPTIDE SYNTHETASE"/>
    <property type="match status" value="1"/>
</dbReference>
<dbReference type="Pfam" id="PF00501">
    <property type="entry name" value="AMP-binding"/>
    <property type="match status" value="7"/>
</dbReference>
<dbReference type="Pfam" id="PF13193">
    <property type="entry name" value="AMP-binding_C"/>
    <property type="match status" value="5"/>
</dbReference>
<dbReference type="Pfam" id="PF00668">
    <property type="entry name" value="Condensation"/>
    <property type="match status" value="6"/>
</dbReference>
<dbReference type="Pfam" id="PF08242">
    <property type="entry name" value="Methyltransf_12"/>
    <property type="match status" value="2"/>
</dbReference>
<dbReference type="Pfam" id="PF00550">
    <property type="entry name" value="PP-binding"/>
    <property type="match status" value="7"/>
</dbReference>
<dbReference type="Pfam" id="PF00975">
    <property type="entry name" value="Thioesterase"/>
    <property type="match status" value="1"/>
</dbReference>
<dbReference type="SMART" id="SM00823">
    <property type="entry name" value="PKS_PP"/>
    <property type="match status" value="7"/>
</dbReference>
<dbReference type="SMART" id="SM00824">
    <property type="entry name" value="PKS_TE"/>
    <property type="match status" value="1"/>
</dbReference>
<dbReference type="SUPFAM" id="SSF56801">
    <property type="entry name" value="Acetyl-CoA synthetase-like"/>
    <property type="match status" value="7"/>
</dbReference>
<dbReference type="SUPFAM" id="SSF47336">
    <property type="entry name" value="ACP-like"/>
    <property type="match status" value="7"/>
</dbReference>
<dbReference type="SUPFAM" id="SSF53474">
    <property type="entry name" value="alpha/beta-Hydrolases"/>
    <property type="match status" value="1"/>
</dbReference>
<dbReference type="SUPFAM" id="SSF52777">
    <property type="entry name" value="CoA-dependent acyltransferases"/>
    <property type="match status" value="12"/>
</dbReference>
<dbReference type="SUPFAM" id="SSF53335">
    <property type="entry name" value="S-adenosyl-L-methionine-dependent methyltransferases"/>
    <property type="match status" value="2"/>
</dbReference>
<dbReference type="PROSITE" id="PS00455">
    <property type="entry name" value="AMP_BINDING"/>
    <property type="match status" value="7"/>
</dbReference>
<dbReference type="PROSITE" id="PS50075">
    <property type="entry name" value="CARRIER"/>
    <property type="match status" value="7"/>
</dbReference>
<dbReference type="PROSITE" id="PS00012">
    <property type="entry name" value="PHOSPHOPANTETHEINE"/>
    <property type="match status" value="4"/>
</dbReference>
<name>CYMA_SALAI</name>
<accession>A8M6W3</accession>
<feature type="chain" id="PRO_0000462572" description="Probable non-canonical nonribosomal peptide synthetase (NRPS) CymA">
    <location>
        <begin position="1"/>
        <end position="7785"/>
    </location>
</feature>
<feature type="domain" description="Carrier 1" evidence="2">
    <location>
        <begin position="487"/>
        <end position="562"/>
    </location>
</feature>
<feature type="domain" description="Carrier 2" evidence="2">
    <location>
        <begin position="1908"/>
        <end position="1983"/>
    </location>
</feature>
<feature type="domain" description="Carrier 3" evidence="2">
    <location>
        <begin position="2958"/>
        <end position="3033"/>
    </location>
</feature>
<feature type="repeat" description="LRR 1" evidence="1">
    <location>
        <begin position="3088"/>
        <end position="3111"/>
    </location>
</feature>
<feature type="domain" description="Carrier 4" evidence="2">
    <location>
        <begin position="3978"/>
        <end position="4053"/>
    </location>
</feature>
<feature type="domain" description="Carrier 5" evidence="2">
    <location>
        <begin position="5002"/>
        <end position="5077"/>
    </location>
</feature>
<feature type="domain" description="Carrier 6" evidence="2">
    <location>
        <begin position="6389"/>
        <end position="6464"/>
    </location>
</feature>
<feature type="repeat" description="LRR 2" evidence="1">
    <location>
        <begin position="6853"/>
        <end position="6875"/>
    </location>
</feature>
<feature type="domain" description="Carrier 7" evidence="2">
    <location>
        <begin position="7432"/>
        <end position="7507"/>
    </location>
</feature>
<feature type="modified residue" description="O-(pantetheine 4'-phosphoryl)serine" evidence="2">
    <location>
        <position position="522"/>
    </location>
</feature>
<feature type="modified residue" description="O-(pantetheine 4'-phosphoryl)serine" evidence="2">
    <location>
        <position position="1943"/>
    </location>
</feature>
<feature type="modified residue" description="O-(pantetheine 4'-phosphoryl)serine" evidence="2">
    <location>
        <position position="2993"/>
    </location>
</feature>
<feature type="modified residue" description="O-(pantetheine 4'-phosphoryl)serine" evidence="2">
    <location>
        <position position="4013"/>
    </location>
</feature>
<feature type="modified residue" description="O-(pantetheine 4'-phosphoryl)serine" evidence="2">
    <location>
        <position position="5037"/>
    </location>
</feature>
<feature type="modified residue" description="O-(pantetheine 4'-phosphoryl)serine" evidence="2">
    <location>
        <position position="6424"/>
    </location>
</feature>
<feature type="modified residue" description="O-(pantetheine 4'-phosphoryl)serine" evidence="2">
    <location>
        <position position="7467"/>
    </location>
</feature>